<reference key="1">
    <citation type="journal article" date="2001" name="Nature">
        <title>The DNA sequence and comparative analysis of human chromosome 20.</title>
        <authorList>
            <person name="Deloukas P."/>
            <person name="Matthews L.H."/>
            <person name="Ashurst J.L."/>
            <person name="Burton J."/>
            <person name="Gilbert J.G.R."/>
            <person name="Jones M."/>
            <person name="Stavrides G."/>
            <person name="Almeida J.P."/>
            <person name="Babbage A.K."/>
            <person name="Bagguley C.L."/>
            <person name="Bailey J."/>
            <person name="Barlow K.F."/>
            <person name="Bates K.N."/>
            <person name="Beard L.M."/>
            <person name="Beare D.M."/>
            <person name="Beasley O.P."/>
            <person name="Bird C.P."/>
            <person name="Blakey S.E."/>
            <person name="Bridgeman A.M."/>
            <person name="Brown A.J."/>
            <person name="Buck D."/>
            <person name="Burrill W.D."/>
            <person name="Butler A.P."/>
            <person name="Carder C."/>
            <person name="Carter N.P."/>
            <person name="Chapman J.C."/>
            <person name="Clamp M."/>
            <person name="Clark G."/>
            <person name="Clark L.N."/>
            <person name="Clark S.Y."/>
            <person name="Clee C.M."/>
            <person name="Clegg S."/>
            <person name="Cobley V.E."/>
            <person name="Collier R.E."/>
            <person name="Connor R.E."/>
            <person name="Corby N.R."/>
            <person name="Coulson A."/>
            <person name="Coville G.J."/>
            <person name="Deadman R."/>
            <person name="Dhami P.D."/>
            <person name="Dunn M."/>
            <person name="Ellington A.G."/>
            <person name="Frankland J.A."/>
            <person name="Fraser A."/>
            <person name="French L."/>
            <person name="Garner P."/>
            <person name="Grafham D.V."/>
            <person name="Griffiths C."/>
            <person name="Griffiths M.N.D."/>
            <person name="Gwilliam R."/>
            <person name="Hall R.E."/>
            <person name="Hammond S."/>
            <person name="Harley J.L."/>
            <person name="Heath P.D."/>
            <person name="Ho S."/>
            <person name="Holden J.L."/>
            <person name="Howden P.J."/>
            <person name="Huckle E."/>
            <person name="Hunt A.R."/>
            <person name="Hunt S.E."/>
            <person name="Jekosch K."/>
            <person name="Johnson C.M."/>
            <person name="Johnson D."/>
            <person name="Kay M.P."/>
            <person name="Kimberley A.M."/>
            <person name="King A."/>
            <person name="Knights A."/>
            <person name="Laird G.K."/>
            <person name="Lawlor S."/>
            <person name="Lehvaeslaiho M.H."/>
            <person name="Leversha M.A."/>
            <person name="Lloyd C."/>
            <person name="Lloyd D.M."/>
            <person name="Lovell J.D."/>
            <person name="Marsh V.L."/>
            <person name="Martin S.L."/>
            <person name="McConnachie L.J."/>
            <person name="McLay K."/>
            <person name="McMurray A.A."/>
            <person name="Milne S.A."/>
            <person name="Mistry D."/>
            <person name="Moore M.J.F."/>
            <person name="Mullikin J.C."/>
            <person name="Nickerson T."/>
            <person name="Oliver K."/>
            <person name="Parker A."/>
            <person name="Patel R."/>
            <person name="Pearce T.A.V."/>
            <person name="Peck A.I."/>
            <person name="Phillimore B.J.C.T."/>
            <person name="Prathalingam S.R."/>
            <person name="Plumb R.W."/>
            <person name="Ramsay H."/>
            <person name="Rice C.M."/>
            <person name="Ross M.T."/>
            <person name="Scott C.E."/>
            <person name="Sehra H.K."/>
            <person name="Shownkeen R."/>
            <person name="Sims S."/>
            <person name="Skuce C.D."/>
            <person name="Smith M.L."/>
            <person name="Soderlund C."/>
            <person name="Steward C.A."/>
            <person name="Sulston J.E."/>
            <person name="Swann R.M."/>
            <person name="Sycamore N."/>
            <person name="Taylor R."/>
            <person name="Tee L."/>
            <person name="Thomas D.W."/>
            <person name="Thorpe A."/>
            <person name="Tracey A."/>
            <person name="Tromans A.C."/>
            <person name="Vaudin M."/>
            <person name="Wall M."/>
            <person name="Wallis J.M."/>
            <person name="Whitehead S.L."/>
            <person name="Whittaker P."/>
            <person name="Willey D.L."/>
            <person name="Williams L."/>
            <person name="Williams S.A."/>
            <person name="Wilming L."/>
            <person name="Wray P.W."/>
            <person name="Hubbard T."/>
            <person name="Durbin R.M."/>
            <person name="Bentley D.R."/>
            <person name="Beck S."/>
            <person name="Rogers J."/>
        </authorList>
    </citation>
    <scope>NUCLEOTIDE SEQUENCE [LARGE SCALE GENOMIC DNA]</scope>
</reference>
<reference key="2">
    <citation type="journal article" date="2004" name="Genome Res.">
        <title>The status, quality, and expansion of the NIH full-length cDNA project: the Mammalian Gene Collection (MGC).</title>
        <authorList>
            <consortium name="The MGC Project Team"/>
        </authorList>
    </citation>
    <scope>NUCLEOTIDE SEQUENCE [LARGE SCALE MRNA]</scope>
    <source>
        <tissue>Prostate</tissue>
    </source>
</reference>
<reference key="3">
    <citation type="journal article" date="2008" name="Mol. Cell">
        <title>Kinase-selective enrichment enables quantitative phosphoproteomics of the kinome across the cell cycle.</title>
        <authorList>
            <person name="Daub H."/>
            <person name="Olsen J.V."/>
            <person name="Bairlein M."/>
            <person name="Gnad F."/>
            <person name="Oppermann F.S."/>
            <person name="Korner R."/>
            <person name="Greff Z."/>
            <person name="Keri G."/>
            <person name="Stemmann O."/>
            <person name="Mann M."/>
        </authorList>
    </citation>
    <scope>IDENTIFICATION BY MASS SPECTROMETRY [LARGE SCALE ANALYSIS]</scope>
    <source>
        <tissue>Cervix carcinoma</tissue>
    </source>
</reference>
<reference key="4">
    <citation type="journal article" date="2009" name="Cell">
        <title>Mammalian BTBD12/SLX4 assembles a Holliday junction resolvase and is required for DNA repair.</title>
        <authorList>
            <person name="Svendsen J.M."/>
            <person name="Smogorzewska A."/>
            <person name="Sowa M.E."/>
            <person name="O'Connell B.C."/>
            <person name="Gygi S.P."/>
            <person name="Elledge S.J."/>
            <person name="Harper J.W."/>
        </authorList>
    </citation>
    <scope>INTERACTION WITH SLX4</scope>
</reference>
<reference key="5">
    <citation type="journal article" date="2013" name="J. Proteome Res.">
        <title>Toward a comprehensive characterization of a human cancer cell phosphoproteome.</title>
        <authorList>
            <person name="Zhou H."/>
            <person name="Di Palma S."/>
            <person name="Preisinger C."/>
            <person name="Peng M."/>
            <person name="Polat A.N."/>
            <person name="Heck A.J."/>
            <person name="Mohammed S."/>
        </authorList>
    </citation>
    <scope>PHOSPHORYLATION [LARGE SCALE ANALYSIS] AT SER-130; SER-213 AND THR-392</scope>
    <scope>IDENTIFICATION BY MASS SPECTROMETRY [LARGE SCALE ANALYSIS]</scope>
    <source>
        <tissue>Cervix carcinoma</tissue>
        <tissue>Erythroleukemia</tissue>
    </source>
</reference>
<reference key="6">
    <citation type="journal article" date="2014" name="Hum. Mol. Genet.">
        <title>Frequent and sex-biased deletion of SLX4IP by illegitimate V(D)J-mediated recombination in childhood acute lymphoblastic leukemia.</title>
        <authorList>
            <person name="Meissner B."/>
            <person name="Bartram T."/>
            <person name="Eckert C."/>
            <person name="Trka J."/>
            <person name="Panzer-Gruemayer R."/>
            <person name="Hermanova I."/>
            <person name="Ellinghaus E."/>
            <person name="Franke A."/>
            <person name="Moericke A."/>
            <person name="Schrauder A."/>
            <person name="Teigler-Schlegel A."/>
            <person name="Doerge P."/>
            <person name="von Stackelberg A."/>
            <person name="Basso G."/>
            <person name="Bartram C.R."/>
            <person name="Kirschner-Schwabe R."/>
            <person name="Bornhaeuser B."/>
            <person name="Bourquin J.P."/>
            <person name="Cazzaniga G."/>
            <person name="Hauer J."/>
            <person name="Attarbaschi A."/>
            <person name="Izraeli S."/>
            <person name="Zaliova M."/>
            <person name="Cario G."/>
            <person name="Zimmermann M."/>
            <person name="Avigad S."/>
            <person name="Sokalska-Duhme M."/>
            <person name="Metzler M."/>
            <person name="Schrappe M."/>
            <person name="Koehler R."/>
            <person name="Te Kronnie G."/>
            <person name="Stanulla M."/>
        </authorList>
    </citation>
    <scope>CHROMOSOMAL REARRANGEMENT</scope>
</reference>
<reference key="7">
    <citation type="journal article" date="2015" name="Mol. Cell. Proteomics">
        <title>System-wide analysis of SUMOylation dynamics in response to replication stress reveals novel small ubiquitin-like modified target proteins and acceptor lysines relevant for genome stability.</title>
        <authorList>
            <person name="Xiao Z."/>
            <person name="Chang J.G."/>
            <person name="Hendriks I.A."/>
            <person name="Sigurdsson J.O."/>
            <person name="Olsen J.V."/>
            <person name="Vertegaal A.C."/>
        </authorList>
    </citation>
    <scope>SUMOYLATION [LARGE SCALE ANALYSIS] AT LYS-79; LYS-239; LYS-347 AND LYS-356</scope>
    <scope>IDENTIFICATION BY MASS SPECTROMETRY [LARGE SCALE ANALYSIS]</scope>
</reference>
<reference key="8">
    <citation type="journal article" date="2017" name="Nat. Struct. Mol. Biol.">
        <title>Site-specific mapping of the human SUMO proteome reveals co-modification with phosphorylation.</title>
        <authorList>
            <person name="Hendriks I.A."/>
            <person name="Lyon D."/>
            <person name="Young C."/>
            <person name="Jensen L.J."/>
            <person name="Vertegaal A.C."/>
            <person name="Nielsen M.L."/>
        </authorList>
    </citation>
    <scope>SUMOYLATION [LARGE SCALE ANALYSIS] AT LYS-61; LYS-79; LYS-167; LYS-176; LYS-239; LYS-242; LYS-256; LYS-291; LYS-347; LYS-356; LYS-372 AND LYS-399</scope>
    <scope>IDENTIFICATION BY MASS SPECTROMETRY [LARGE SCALE ANALYSIS]</scope>
</reference>
<sequence length="408" mass="45552">MASKKFAVKCGNFAVLVDLHILPQGSNKDTSWFSEQKKEEVCLLLKETIDSRVQEYLEVRKQHRPSNAEFTRSNPLSLKGYGFQITAYFLKRGIRLRCIRSTQNAELCVFPDRFVVCVSQLAFSRDLLASQNEDLTERVLHGVSDYFAECAESSLPPSAKLRRNALKEIVKRTETKSSVTSKSQTRRDTVETSSDSVIAEIARRRNDGQASSSPPSESMGQAKDSIKAAESHWGLPVQKLEKVNQTQPEDTSGQQKPHPGERLKTGLLSRSPVCSCESASPCPKQSPRVAKTQQKRRNCSSAEDFDHHGRVSLGSDRLVPREIIVEKSKAVRVLPASELSDPGLLLKQDLAKTTSKEELHVLESLSSRHLMKNNPGQAQQTGLATNTERLSTIQNSPTKKRKKYERGH</sequence>
<comment type="subunit">
    <text evidence="2">Interacts with SLX4/BTBD12; subunit of different structure-specific endonucleases.</text>
</comment>
<comment type="interaction">
    <interactant intactId="EBI-2370881">
        <id>Q5VYV7</id>
    </interactant>
    <interactant intactId="EBI-2370740">
        <id>Q8IY92</id>
        <label>SLX4</label>
    </interactant>
    <organismsDiffer>false</organismsDiffer>
    <experiments>4</experiments>
</comment>
<comment type="disease">
    <text evidence="3">Chromosomal aberrations involving SLX4IP are found in acute lymphoblastic leukemia. A site-specific deletion within the 5' region of SLX4IP is found in 30% of childhood acute lymphoblastic leukemia in general and more than 60% of ETV6/RUNX1-rearranged acute lymphoblastic leukemia. Breakpoints within SLX4IP reveal junctions with typical characteristics of illegitimate V(D)J mediated recombination. SLX4IP deletions are significantly associated with male gender and ETV6/RUNX1-rearranged acute lymphoblastic leukemia.</text>
</comment>
<comment type="similarity">
    <text evidence="4">Belongs to the SLX4IP family.</text>
</comment>
<comment type="sequence caution" evidence="4">
    <conflict type="miscellaneous discrepancy">
        <sequence resource="EMBL-CDS" id="AAH20787"/>
    </conflict>
    <text>Contaminating sequence. Potential poly-A sequence.</text>
</comment>
<comment type="sequence caution" evidence="4">
    <conflict type="miscellaneous discrepancy">
        <sequence resource="EMBL-CDS" id="AAH26094"/>
    </conflict>
    <text>Contaminating sequence. Potential poly-A sequence.</text>
</comment>
<keyword id="KW-1017">Isopeptide bond</keyword>
<keyword id="KW-0597">Phosphoprotein</keyword>
<keyword id="KW-1267">Proteomics identification</keyword>
<keyword id="KW-1185">Reference proteome</keyword>
<keyword id="KW-0832">Ubl conjugation</keyword>
<gene>
    <name type="primary">SLX4IP</name>
    <name type="synonym">C20orf94</name>
</gene>
<evidence type="ECO:0000256" key="1">
    <source>
        <dbReference type="SAM" id="MobiDB-lite"/>
    </source>
</evidence>
<evidence type="ECO:0000269" key="2">
    <source>
    </source>
</evidence>
<evidence type="ECO:0000269" key="3">
    <source>
    </source>
</evidence>
<evidence type="ECO:0000305" key="4"/>
<evidence type="ECO:0007744" key="5">
    <source>
    </source>
</evidence>
<evidence type="ECO:0007744" key="6">
    <source>
    </source>
</evidence>
<evidence type="ECO:0007744" key="7">
    <source>
    </source>
</evidence>
<accession>Q5VYV7</accession>
<accession>Q05CG2</accession>
<accession>Q05CT9</accession>
<name>SLX4I_HUMAN</name>
<proteinExistence type="evidence at protein level"/>
<protein>
    <recommendedName>
        <fullName>Protein SLX4IP</fullName>
    </recommendedName>
    <alternativeName>
        <fullName>SLX4-interacting protein</fullName>
    </alternativeName>
</protein>
<organism>
    <name type="scientific">Homo sapiens</name>
    <name type="common">Human</name>
    <dbReference type="NCBI Taxonomy" id="9606"/>
    <lineage>
        <taxon>Eukaryota</taxon>
        <taxon>Metazoa</taxon>
        <taxon>Chordata</taxon>
        <taxon>Craniata</taxon>
        <taxon>Vertebrata</taxon>
        <taxon>Euteleostomi</taxon>
        <taxon>Mammalia</taxon>
        <taxon>Eutheria</taxon>
        <taxon>Euarchontoglires</taxon>
        <taxon>Primates</taxon>
        <taxon>Haplorrhini</taxon>
        <taxon>Catarrhini</taxon>
        <taxon>Hominidae</taxon>
        <taxon>Homo</taxon>
    </lineage>
</organism>
<dbReference type="EMBL" id="AL133340">
    <property type="status" value="NOT_ANNOTATED_CDS"/>
    <property type="molecule type" value="Genomic_DNA"/>
</dbReference>
<dbReference type="EMBL" id="AL353599">
    <property type="status" value="NOT_ANNOTATED_CDS"/>
    <property type="molecule type" value="Genomic_DNA"/>
</dbReference>
<dbReference type="EMBL" id="AL035456">
    <property type="status" value="NOT_ANNOTATED_CDS"/>
    <property type="molecule type" value="Genomic_DNA"/>
</dbReference>
<dbReference type="EMBL" id="BC020787">
    <property type="protein sequence ID" value="AAH20787.1"/>
    <property type="status" value="ALT_SEQ"/>
    <property type="molecule type" value="mRNA"/>
</dbReference>
<dbReference type="EMBL" id="BC026094">
    <property type="protein sequence ID" value="AAH26094.1"/>
    <property type="status" value="ALT_SEQ"/>
    <property type="molecule type" value="mRNA"/>
</dbReference>
<dbReference type="CCDS" id="CCDS33439.1"/>
<dbReference type="RefSeq" id="NP_001009608.1">
    <property type="nucleotide sequence ID" value="NM_001009608.3"/>
</dbReference>
<dbReference type="BioGRID" id="126147">
    <property type="interactions" value="64"/>
</dbReference>
<dbReference type="FunCoup" id="Q5VYV7">
    <property type="interactions" value="1052"/>
</dbReference>
<dbReference type="IntAct" id="Q5VYV7">
    <property type="interactions" value="37"/>
</dbReference>
<dbReference type="STRING" id="9606.ENSP00000335557"/>
<dbReference type="iPTMnet" id="Q5VYV7"/>
<dbReference type="PhosphoSitePlus" id="Q5VYV7"/>
<dbReference type="BioMuta" id="SLX4IP"/>
<dbReference type="DMDM" id="74747720"/>
<dbReference type="jPOST" id="Q5VYV7"/>
<dbReference type="MassIVE" id="Q5VYV7"/>
<dbReference type="PaxDb" id="9606-ENSP00000335557"/>
<dbReference type="PeptideAtlas" id="Q5VYV7"/>
<dbReference type="ProteomicsDB" id="65652"/>
<dbReference type="Pumba" id="Q5VYV7"/>
<dbReference type="Antibodypedia" id="62780">
    <property type="antibodies" value="26 antibodies from 6 providers"/>
</dbReference>
<dbReference type="DNASU" id="128710"/>
<dbReference type="Ensembl" id="ENST00000334534.10">
    <property type="protein sequence ID" value="ENSP00000335557.5"/>
    <property type="gene ID" value="ENSG00000149346.15"/>
</dbReference>
<dbReference type="GeneID" id="128710"/>
<dbReference type="KEGG" id="hsa:128710"/>
<dbReference type="MANE-Select" id="ENST00000334534.10">
    <property type="protein sequence ID" value="ENSP00000335557.5"/>
    <property type="RefSeq nucleotide sequence ID" value="NM_001009608.3"/>
    <property type="RefSeq protein sequence ID" value="NP_001009608.1"/>
</dbReference>
<dbReference type="UCSC" id="uc010zre.3">
    <property type="organism name" value="human"/>
</dbReference>
<dbReference type="AGR" id="HGNC:16225"/>
<dbReference type="CTD" id="128710"/>
<dbReference type="DisGeNET" id="128710"/>
<dbReference type="GeneCards" id="SLX4IP"/>
<dbReference type="HGNC" id="HGNC:16225">
    <property type="gene designation" value="SLX4IP"/>
</dbReference>
<dbReference type="HPA" id="ENSG00000149346">
    <property type="expression patterns" value="Low tissue specificity"/>
</dbReference>
<dbReference type="MalaCards" id="SLX4IP"/>
<dbReference type="MIM" id="615958">
    <property type="type" value="gene"/>
</dbReference>
<dbReference type="neXtProt" id="NX_Q5VYV7"/>
<dbReference type="OpenTargets" id="ENSG00000149346"/>
<dbReference type="PharmGKB" id="PA25801"/>
<dbReference type="VEuPathDB" id="HostDB:ENSG00000149346"/>
<dbReference type="eggNOG" id="ENOG502QQHZ">
    <property type="taxonomic scope" value="Eukaryota"/>
</dbReference>
<dbReference type="GeneTree" id="ENSGT00390000016400"/>
<dbReference type="HOGENOM" id="CLU_039900_0_0_1"/>
<dbReference type="InParanoid" id="Q5VYV7"/>
<dbReference type="OMA" id="MKNKPGQ"/>
<dbReference type="OrthoDB" id="9933290at2759"/>
<dbReference type="PAN-GO" id="Q5VYV7">
    <property type="GO annotations" value="0 GO annotations based on evolutionary models"/>
</dbReference>
<dbReference type="PhylomeDB" id="Q5VYV7"/>
<dbReference type="TreeFam" id="TF330769"/>
<dbReference type="PathwayCommons" id="Q5VYV7"/>
<dbReference type="SignaLink" id="Q5VYV7"/>
<dbReference type="BioGRID-ORCS" id="128710">
    <property type="hits" value="13 hits in 1154 CRISPR screens"/>
</dbReference>
<dbReference type="ChiTaRS" id="SLX4IP">
    <property type="organism name" value="human"/>
</dbReference>
<dbReference type="GenomeRNAi" id="128710"/>
<dbReference type="Pharos" id="Q5VYV7">
    <property type="development level" value="Tbio"/>
</dbReference>
<dbReference type="PRO" id="PR:Q5VYV7"/>
<dbReference type="Proteomes" id="UP000005640">
    <property type="component" value="Chromosome 20"/>
</dbReference>
<dbReference type="RNAct" id="Q5VYV7">
    <property type="molecule type" value="protein"/>
</dbReference>
<dbReference type="Bgee" id="ENSG00000149346">
    <property type="expression patterns" value="Expressed in epithelial cell of pancreas and 189 other cell types or tissues"/>
</dbReference>
<dbReference type="ExpressionAtlas" id="Q5VYV7">
    <property type="expression patterns" value="baseline and differential"/>
</dbReference>
<dbReference type="InterPro" id="IPR031479">
    <property type="entry name" value="SLX4IP"/>
</dbReference>
<dbReference type="PANTHER" id="PTHR28557">
    <property type="entry name" value="PROTEIN SLX4IP"/>
    <property type="match status" value="1"/>
</dbReference>
<dbReference type="PANTHER" id="PTHR28557:SF1">
    <property type="entry name" value="PROTEIN SLX4IP"/>
    <property type="match status" value="1"/>
</dbReference>
<dbReference type="Pfam" id="PF15744">
    <property type="entry name" value="UPF0492"/>
    <property type="match status" value="1"/>
</dbReference>
<feature type="chain" id="PRO_0000306119" description="Protein SLX4IP">
    <location>
        <begin position="1"/>
        <end position="408"/>
    </location>
</feature>
<feature type="region of interest" description="Disordered" evidence="1">
    <location>
        <begin position="173"/>
        <end position="226"/>
    </location>
</feature>
<feature type="region of interest" description="Disordered" evidence="1">
    <location>
        <begin position="243"/>
        <end position="313"/>
    </location>
</feature>
<feature type="region of interest" description="Disordered" evidence="1">
    <location>
        <begin position="365"/>
        <end position="408"/>
    </location>
</feature>
<feature type="compositionally biased region" description="Polar residues" evidence="1">
    <location>
        <begin position="208"/>
        <end position="219"/>
    </location>
</feature>
<feature type="compositionally biased region" description="Polar residues" evidence="1">
    <location>
        <begin position="243"/>
        <end position="255"/>
    </location>
</feature>
<feature type="compositionally biased region" description="Polar residues" evidence="1">
    <location>
        <begin position="374"/>
        <end position="397"/>
    </location>
</feature>
<feature type="compositionally biased region" description="Basic residues" evidence="1">
    <location>
        <begin position="398"/>
        <end position="408"/>
    </location>
</feature>
<feature type="modified residue" description="Phosphoserine" evidence="5">
    <location>
        <position position="130"/>
    </location>
</feature>
<feature type="modified residue" description="Phosphoserine" evidence="5">
    <location>
        <position position="213"/>
    </location>
</feature>
<feature type="modified residue" description="Phosphothreonine" evidence="5">
    <location>
        <position position="392"/>
    </location>
</feature>
<feature type="cross-link" description="Glycyl lysine isopeptide (Lys-Gly) (interchain with G-Cter in SUMO2)" evidence="7">
    <location>
        <position position="61"/>
    </location>
</feature>
<feature type="cross-link" description="Glycyl lysine isopeptide (Lys-Gly) (interchain with G-Cter in SUMO2)" evidence="6 7">
    <location>
        <position position="79"/>
    </location>
</feature>
<feature type="cross-link" description="Glycyl lysine isopeptide (Lys-Gly) (interchain with G-Cter in SUMO2)" evidence="7">
    <location>
        <position position="167"/>
    </location>
</feature>
<feature type="cross-link" description="Glycyl lysine isopeptide (Lys-Gly) (interchain with G-Cter in SUMO2)" evidence="7">
    <location>
        <position position="176"/>
    </location>
</feature>
<feature type="cross-link" description="Glycyl lysine isopeptide (Lys-Gly) (interchain with G-Cter in SUMO2)" evidence="6 7">
    <location>
        <position position="239"/>
    </location>
</feature>
<feature type="cross-link" description="Glycyl lysine isopeptide (Lys-Gly) (interchain with G-Cter in SUMO2)" evidence="7">
    <location>
        <position position="242"/>
    </location>
</feature>
<feature type="cross-link" description="Glycyl lysine isopeptide (Lys-Gly) (interchain with G-Cter in SUMO2)" evidence="7">
    <location>
        <position position="256"/>
    </location>
</feature>
<feature type="cross-link" description="Glycyl lysine isopeptide (Lys-Gly) (interchain with G-Cter in SUMO2)" evidence="7">
    <location>
        <position position="291"/>
    </location>
</feature>
<feature type="cross-link" description="Glycyl lysine isopeptide (Lys-Gly) (interchain with G-Cter in SUMO2)" evidence="6 7">
    <location>
        <position position="347"/>
    </location>
</feature>
<feature type="cross-link" description="Glycyl lysine isopeptide (Lys-Gly) (interchain with G-Cter in SUMO2)" evidence="6 7">
    <location>
        <position position="356"/>
    </location>
</feature>
<feature type="cross-link" description="Glycyl lysine isopeptide (Lys-Gly) (interchain with G-Cter in SUMO2)" evidence="7">
    <location>
        <position position="372"/>
    </location>
</feature>
<feature type="cross-link" description="Glycyl lysine isopeptide (Lys-Gly) (interchain with G-Cter in SUMO2)" evidence="7">
    <location>
        <position position="399"/>
    </location>
</feature>
<feature type="sequence variant" id="VAR_035277" description="In dbSNP:rs6077853.">
    <original>R</original>
    <variation>Q</variation>
    <location>
        <position position="317"/>
    </location>
</feature>